<name>YC018_YEAST</name>
<reference key="1">
    <citation type="journal article" date="1992" name="Nature">
        <title>The complete DNA sequence of yeast chromosome III.</title>
        <authorList>
            <person name="Oliver S.G."/>
            <person name="van der Aart Q.J.M."/>
            <person name="Agostoni-Carbone M.L."/>
            <person name="Aigle M."/>
            <person name="Alberghina L."/>
            <person name="Alexandraki D."/>
            <person name="Antoine G."/>
            <person name="Anwar R."/>
            <person name="Ballesta J.P.G."/>
            <person name="Benit P."/>
            <person name="Berben G."/>
            <person name="Bergantino E."/>
            <person name="Biteau N."/>
            <person name="Bolle P.-A."/>
            <person name="Bolotin-Fukuhara M."/>
            <person name="Brown A."/>
            <person name="Brown A.J.P."/>
            <person name="Buhler J.-M."/>
            <person name="Carcano C."/>
            <person name="Carignani G."/>
            <person name="Cederberg H."/>
            <person name="Chanet R."/>
            <person name="Contreras R."/>
            <person name="Crouzet M."/>
            <person name="Daignan-Fornier B."/>
            <person name="Defoor E."/>
            <person name="Delgado M.D."/>
            <person name="Demolder J."/>
            <person name="Doira C."/>
            <person name="Dubois E."/>
            <person name="Dujon B."/>
            <person name="Duesterhoeft A."/>
            <person name="Erdmann D."/>
            <person name="Esteban M."/>
            <person name="Fabre F."/>
            <person name="Fairhead C."/>
            <person name="Faye G."/>
            <person name="Feldmann H."/>
            <person name="Fiers W."/>
            <person name="Francingues-Gaillard M.-C."/>
            <person name="Franco L."/>
            <person name="Frontali L."/>
            <person name="Fukuhara H."/>
            <person name="Fuller L.J."/>
            <person name="Galland P."/>
            <person name="Gent M.E."/>
            <person name="Gigot D."/>
            <person name="Gilliquet V."/>
            <person name="Glansdorff N."/>
            <person name="Goffeau A."/>
            <person name="Grenson M."/>
            <person name="Grisanti P."/>
            <person name="Grivell L.A."/>
            <person name="de Haan M."/>
            <person name="Haasemann M."/>
            <person name="Hatat D."/>
            <person name="Hoenicka J."/>
            <person name="Hegemann J.H."/>
            <person name="Herbert C.J."/>
            <person name="Hilger F."/>
            <person name="Hohmann S."/>
            <person name="Hollenberg C.P."/>
            <person name="Huse K."/>
            <person name="Iborra F."/>
            <person name="Indge K.J."/>
            <person name="Isono K."/>
            <person name="Jacq C."/>
            <person name="Jacquet M."/>
            <person name="James C.M."/>
            <person name="Jauniaux J.-C."/>
            <person name="Jia Y."/>
            <person name="Jimenez A."/>
            <person name="Kelly A."/>
            <person name="Kleinhans U."/>
            <person name="Kreisl P."/>
            <person name="Lanfranchi G."/>
            <person name="Lewis C."/>
            <person name="van der Linden C.G."/>
            <person name="Lucchini G."/>
            <person name="Lutzenkirchen K."/>
            <person name="Maat M.J."/>
            <person name="Mallet L."/>
            <person name="Mannhaupt G."/>
            <person name="Martegani E."/>
            <person name="Mathieu A."/>
            <person name="Maurer C.T.C."/>
            <person name="McConnell D."/>
            <person name="McKee R.A."/>
            <person name="Messenguy F."/>
            <person name="Mewes H.-W."/>
            <person name="Molemans F."/>
            <person name="Montague M.A."/>
            <person name="Muzi Falconi M."/>
            <person name="Navas L."/>
            <person name="Newlon C.S."/>
            <person name="Noone D."/>
            <person name="Pallier C."/>
            <person name="Panzeri L."/>
            <person name="Pearson B.M."/>
            <person name="Perea J."/>
            <person name="Philippsen P."/>
            <person name="Pierard A."/>
            <person name="Planta R.J."/>
            <person name="Plevani P."/>
            <person name="Poetsch B."/>
            <person name="Pohl F.M."/>
            <person name="Purnelle B."/>
            <person name="Ramezani Rad M."/>
            <person name="Rasmussen S.W."/>
            <person name="Raynal A."/>
            <person name="Remacha M.A."/>
            <person name="Richterich P."/>
            <person name="Roberts A.B."/>
            <person name="Rodriguez F."/>
            <person name="Sanz E."/>
            <person name="Schaaff-Gerstenschlaeger I."/>
            <person name="Scherens B."/>
            <person name="Schweitzer B."/>
            <person name="Shu Y."/>
            <person name="Skala J."/>
            <person name="Slonimski P.P."/>
            <person name="Sor F."/>
            <person name="Soustelle C."/>
            <person name="Spiegelberg R."/>
            <person name="Stateva L.I."/>
            <person name="Steensma H.Y."/>
            <person name="Steiner S."/>
            <person name="Thierry A."/>
            <person name="Thireos G."/>
            <person name="Tzermia M."/>
            <person name="Urrestarazu L.A."/>
            <person name="Valle G."/>
            <person name="Vetter I."/>
            <person name="van Vliet-Reedijk J.C."/>
            <person name="Voet M."/>
            <person name="Volckaert G."/>
            <person name="Vreken P."/>
            <person name="Wang H."/>
            <person name="Warmington J.R."/>
            <person name="von Wettstein D."/>
            <person name="Wicksteed B.L."/>
            <person name="Wilson C."/>
            <person name="Wurst H."/>
            <person name="Xu G."/>
            <person name="Yoshikawa A."/>
            <person name="Zimmermann F.K."/>
            <person name="Sgouros J.G."/>
        </authorList>
    </citation>
    <scope>NUCLEOTIDE SEQUENCE [LARGE SCALE GENOMIC DNA]</scope>
    <source>
        <strain>ATCC 204508 / S288c</strain>
    </source>
</reference>
<reference key="2">
    <citation type="journal article" date="2014" name="G3 (Bethesda)">
        <title>The reference genome sequence of Saccharomyces cerevisiae: Then and now.</title>
        <authorList>
            <person name="Engel S.R."/>
            <person name="Dietrich F.S."/>
            <person name="Fisk D.G."/>
            <person name="Binkley G."/>
            <person name="Balakrishnan R."/>
            <person name="Costanzo M.C."/>
            <person name="Dwight S.S."/>
            <person name="Hitz B.C."/>
            <person name="Karra K."/>
            <person name="Nash R.S."/>
            <person name="Weng S."/>
            <person name="Wong E.D."/>
            <person name="Lloyd P."/>
            <person name="Skrzypek M.S."/>
            <person name="Miyasato S.R."/>
            <person name="Simison M."/>
            <person name="Cherry J.M."/>
        </authorList>
    </citation>
    <scope>GENOME REANNOTATION</scope>
    <source>
        <strain>ATCC 204508 / S288c</strain>
    </source>
</reference>
<proteinExistence type="uncertain"/>
<sequence>MYSHENHVNFQIVVGIPLLIKAVILCIQNILEVLLEDIGILKMESIFLHTNITIIPHSVLYVSLSYYIINPCTSASSNFDDSFS</sequence>
<evidence type="ECO:0000255" key="1"/>
<evidence type="ECO:0000305" key="2"/>
<evidence type="ECO:0000305" key="3">
    <source>
    </source>
</evidence>
<keyword id="KW-0472">Membrane</keyword>
<keyword id="KW-0812">Transmembrane</keyword>
<keyword id="KW-1133">Transmembrane helix</keyword>
<accession>Q96VH1</accession>
<dbReference type="EMBL" id="X59720">
    <property type="protein sequence ID" value="CAC42973.1"/>
    <property type="molecule type" value="Genomic_DNA"/>
</dbReference>
<dbReference type="PIR" id="S78740">
    <property type="entry name" value="S78740"/>
</dbReference>
<dbReference type="PIR" id="S78742">
    <property type="entry name" value="S78742"/>
</dbReference>
<dbReference type="STRING" id="4932.YCR018C-A"/>
<dbReference type="PaxDb" id="4932-YCR018C-A"/>
<dbReference type="EnsemblFungi" id="YCR018C-A_mRNA">
    <property type="protein sequence ID" value="YCR018C-A"/>
    <property type="gene ID" value="YCR018C-A"/>
</dbReference>
<dbReference type="AGR" id="SGD:S000007230"/>
<dbReference type="SGD" id="S000007230">
    <property type="gene designation" value="YCR018C-A"/>
</dbReference>
<dbReference type="GeneTree" id="ENSGT00940000177947"/>
<dbReference type="HOGENOM" id="CLU_168474_0_0_1"/>
<dbReference type="OMA" id="VINPCAS"/>
<dbReference type="GO" id="GO:0016020">
    <property type="term" value="C:membrane"/>
    <property type="evidence" value="ECO:0007669"/>
    <property type="project" value="UniProtKB-SubCell"/>
</dbReference>
<protein>
    <recommendedName>
        <fullName>Putative uncharacterized protein YCR018C-A</fullName>
    </recommendedName>
</protein>
<organism>
    <name type="scientific">Saccharomyces cerevisiae (strain ATCC 204508 / S288c)</name>
    <name type="common">Baker's yeast</name>
    <dbReference type="NCBI Taxonomy" id="559292"/>
    <lineage>
        <taxon>Eukaryota</taxon>
        <taxon>Fungi</taxon>
        <taxon>Dikarya</taxon>
        <taxon>Ascomycota</taxon>
        <taxon>Saccharomycotina</taxon>
        <taxon>Saccharomycetes</taxon>
        <taxon>Saccharomycetales</taxon>
        <taxon>Saccharomycetaceae</taxon>
        <taxon>Saccharomyces</taxon>
    </lineage>
</organism>
<gene>
    <name type="ordered locus">YCR018C-A</name>
</gene>
<feature type="chain" id="PRO_0000299835" description="Putative uncharacterized protein YCR018C-A">
    <location>
        <begin position="1"/>
        <end position="84"/>
    </location>
</feature>
<feature type="transmembrane region" description="Helical" evidence="1">
    <location>
        <begin position="7"/>
        <end position="27"/>
    </location>
</feature>
<feature type="transmembrane region" description="Helical" evidence="1">
    <location>
        <begin position="52"/>
        <end position="72"/>
    </location>
</feature>
<comment type="subcellular location">
    <subcellularLocation>
        <location evidence="2">Membrane</location>
        <topology evidence="2">Multi-pass membrane protein</topology>
    </subcellularLocation>
</comment>
<comment type="caution">
    <text evidence="3">Product of a dubious gene prediction unlikely to encode a functional protein. Because of that it is not part of the S.cerevisiae S288c complete/reference proteome set.</text>
</comment>